<organism>
    <name type="scientific">Lacticaseibacillus casei</name>
    <name type="common">Lactobacillus casei</name>
    <dbReference type="NCBI Taxonomy" id="1582"/>
    <lineage>
        <taxon>Bacteria</taxon>
        <taxon>Bacillati</taxon>
        <taxon>Bacillota</taxon>
        <taxon>Bacilli</taxon>
        <taxon>Lactobacillales</taxon>
        <taxon>Lactobacillaceae</taxon>
        <taxon>Lacticaseibacillus</taxon>
    </lineage>
</organism>
<evidence type="ECO:0000255" key="1">
    <source>
        <dbReference type="HAMAP-Rule" id="MF_01669"/>
    </source>
</evidence>
<evidence type="ECO:0000305" key="2"/>
<accession>A5YBJ6</accession>
<sequence length="642" mass="70086">MAADAKKETIRLTTAQALVRFLNQQYIDVDGQVTSFVEGLFAIFGHGNVLGLGEALQEDPGHLKVYQGHNEQGMASTAIAYSRQLYRHKIFAVTASAGPGSANFVTAAGNAYVNSIPILFLPADTFATRQPDPVLQQIEVDYSADTTTNDVLKPVSKYWDRIERPEQLMSALLKAFEVLTNPATAGPVTIALPQDVEGQAYDYPLSFFKKRVHVVKRVQPSSAELAGAVELIQASQTPVLIVGGGAKFSDAGAAIETFSERFNIPIVETPTGKSAISSDFPNNMGGTGILGTAAANAVITKADLIIGAGTRYTDFTTASKTAIHPGKTQLININLNRMQSYKFDAFPIVADVRDTLSQLTESLSDYRSQFTDLATIKEAWQKERQRLAHTNYDAPAYVPEVKNQFDAKTMAAYAEKLQTHLTQTEAVIAVNNTIDPTSIIVAAAGSLPGDVQRIWDPVVPNTYHMEYGYSMMGYEVPAALGIKLAQPDQESYALVGDGSFMMLHSELVTALQYHKKINILVFDNSGFASINNLQMAQGSNSYLTEFRTSDNDIMKTDFAKIAEGYGAKAYRANDRKSLIAAIEDAKKQTVSTLIDIKVLPKTMTQGYGQSWWRVGVSEISNNPKVQKAYQDIQTGIDKAFKY</sequence>
<proteinExistence type="inferred from homology"/>
<keyword id="KW-0378">Hydrolase</keyword>
<keyword id="KW-0460">Magnesium</keyword>
<keyword id="KW-0479">Metal-binding</keyword>
<keyword id="KW-0520">NAD</keyword>
<keyword id="KW-0786">Thiamine pyrophosphate</keyword>
<protein>
    <recommendedName>
        <fullName evidence="1">3D-(3,5/4)-trihydroxycyclohexane-1,2-dione hydrolase</fullName>
        <shortName evidence="1">THcHDO hydrolase</shortName>
        <ecNumber evidence="1">3.7.1.22</ecNumber>
    </recommendedName>
</protein>
<reference key="1">
    <citation type="journal article" date="2007" name="Appl. Environ. Microbiol.">
        <title>Identification of a gene cluster allowing Lactobacillus casei BL23 the utilization of myo-inositol.</title>
        <authorList>
            <person name="Yebra M.J."/>
            <person name="Zuniga M."/>
            <person name="Beaufils S."/>
            <person name="Perez-Martinez G."/>
            <person name="Deutscher J."/>
            <person name="Monedero V."/>
        </authorList>
    </citation>
    <scope>NUCLEOTIDE SEQUENCE [GENOMIC DNA]</scope>
    <source>
        <strain>BL23</strain>
    </source>
</reference>
<comment type="function">
    <text evidence="1">Involved in the cleavage of the C1-C2 bond of 3D-(3,5/4)-trihydroxycyclohexane-1,2-dione (THcHDO) to yield 5-deoxy-glucuronate (5DG).</text>
</comment>
<comment type="catalytic activity">
    <reaction evidence="1">
        <text>3D-3,5/4-trihydroxycyclohexane-1,2-dione + H2O = 5-deoxy-D-glucuronate + H(+)</text>
        <dbReference type="Rhea" id="RHEA:25836"/>
        <dbReference type="ChEBI" id="CHEBI:15377"/>
        <dbReference type="ChEBI" id="CHEBI:15378"/>
        <dbReference type="ChEBI" id="CHEBI:28446"/>
        <dbReference type="ChEBI" id="CHEBI:58852"/>
        <dbReference type="EC" id="3.7.1.22"/>
    </reaction>
</comment>
<comment type="cofactor">
    <cofactor evidence="1">
        <name>Mg(2+)</name>
        <dbReference type="ChEBI" id="CHEBI:18420"/>
    </cofactor>
    <text evidence="1">Binds 1 Mg(2+) ion per subunit.</text>
</comment>
<comment type="cofactor">
    <cofactor evidence="1">
        <name>thiamine diphosphate</name>
        <dbReference type="ChEBI" id="CHEBI:58937"/>
    </cofactor>
    <text evidence="1">Binds 1 thiamine pyrophosphate per subunit.</text>
</comment>
<comment type="pathway">
    <text evidence="1">Polyol metabolism; myo-inositol degradation into acetyl-CoA; acetyl-CoA from myo-inositol: step 3/7.</text>
</comment>
<comment type="similarity">
    <text evidence="1">Belongs to the TPP enzyme family.</text>
</comment>
<comment type="sequence caution" evidence="2">
    <conflict type="erroneous initiation">
        <sequence resource="EMBL-CDS" id="ABP57765"/>
    </conflict>
</comment>
<dbReference type="EC" id="3.7.1.22" evidence="1"/>
<dbReference type="EMBL" id="EF382358">
    <property type="protein sequence ID" value="ABP57765.1"/>
    <property type="status" value="ALT_INIT"/>
    <property type="molecule type" value="Genomic_DNA"/>
</dbReference>
<dbReference type="SMR" id="A5YBJ6"/>
<dbReference type="STRING" id="1582.AAW28_06900"/>
<dbReference type="eggNOG" id="COG3962">
    <property type="taxonomic scope" value="Bacteria"/>
</dbReference>
<dbReference type="UniPathway" id="UPA00076">
    <property type="reaction ID" value="UER00145"/>
</dbReference>
<dbReference type="GO" id="GO:0005948">
    <property type="term" value="C:acetolactate synthase complex"/>
    <property type="evidence" value="ECO:0007669"/>
    <property type="project" value="TreeGrafter"/>
</dbReference>
<dbReference type="GO" id="GO:0102481">
    <property type="term" value="F:3D-(3,5/4)-trihydroxycyclohexane-1,2-dione hydrolase activity"/>
    <property type="evidence" value="ECO:0007669"/>
    <property type="project" value="UniProtKB-EC"/>
</dbReference>
<dbReference type="GO" id="GO:0003984">
    <property type="term" value="F:acetolactate synthase activity"/>
    <property type="evidence" value="ECO:0007669"/>
    <property type="project" value="TreeGrafter"/>
</dbReference>
<dbReference type="GO" id="GO:0050660">
    <property type="term" value="F:flavin adenine dinucleotide binding"/>
    <property type="evidence" value="ECO:0007669"/>
    <property type="project" value="TreeGrafter"/>
</dbReference>
<dbReference type="GO" id="GO:0000287">
    <property type="term" value="F:magnesium ion binding"/>
    <property type="evidence" value="ECO:0007669"/>
    <property type="project" value="UniProtKB-UniRule"/>
</dbReference>
<dbReference type="GO" id="GO:0030976">
    <property type="term" value="F:thiamine pyrophosphate binding"/>
    <property type="evidence" value="ECO:0007669"/>
    <property type="project" value="UniProtKB-UniRule"/>
</dbReference>
<dbReference type="GO" id="GO:0019310">
    <property type="term" value="P:inositol catabolic process"/>
    <property type="evidence" value="ECO:0007669"/>
    <property type="project" value="UniProtKB-UniRule"/>
</dbReference>
<dbReference type="GO" id="GO:0009097">
    <property type="term" value="P:isoleucine biosynthetic process"/>
    <property type="evidence" value="ECO:0007669"/>
    <property type="project" value="TreeGrafter"/>
</dbReference>
<dbReference type="GO" id="GO:0009099">
    <property type="term" value="P:L-valine biosynthetic process"/>
    <property type="evidence" value="ECO:0007669"/>
    <property type="project" value="TreeGrafter"/>
</dbReference>
<dbReference type="CDD" id="cd07035">
    <property type="entry name" value="TPP_PYR_POX_like"/>
    <property type="match status" value="1"/>
</dbReference>
<dbReference type="Gene3D" id="3.40.50.970">
    <property type="match status" value="2"/>
</dbReference>
<dbReference type="Gene3D" id="3.40.50.1220">
    <property type="entry name" value="TPP-binding domain"/>
    <property type="match status" value="1"/>
</dbReference>
<dbReference type="HAMAP" id="MF_01669">
    <property type="entry name" value="IolD"/>
    <property type="match status" value="1"/>
</dbReference>
<dbReference type="InterPro" id="IPR029035">
    <property type="entry name" value="DHS-like_NAD/FAD-binding_dom"/>
</dbReference>
<dbReference type="InterPro" id="IPR030817">
    <property type="entry name" value="Myo_inos_IolD"/>
</dbReference>
<dbReference type="InterPro" id="IPR023757">
    <property type="entry name" value="THcHDO_hydrolase_firmi"/>
</dbReference>
<dbReference type="InterPro" id="IPR029061">
    <property type="entry name" value="THDP-binding"/>
</dbReference>
<dbReference type="InterPro" id="IPR012000">
    <property type="entry name" value="Thiamin_PyroP_enz_cen_dom"/>
</dbReference>
<dbReference type="InterPro" id="IPR012001">
    <property type="entry name" value="Thiamin_PyroP_enz_TPP-bd_dom"/>
</dbReference>
<dbReference type="InterPro" id="IPR000399">
    <property type="entry name" value="TPP-bd_CS"/>
</dbReference>
<dbReference type="InterPro" id="IPR045229">
    <property type="entry name" value="TPP_enz"/>
</dbReference>
<dbReference type="InterPro" id="IPR011766">
    <property type="entry name" value="TPP_enzyme_TPP-bd"/>
</dbReference>
<dbReference type="NCBIfam" id="TIGR04377">
    <property type="entry name" value="myo_inos_iolD"/>
    <property type="match status" value="1"/>
</dbReference>
<dbReference type="PANTHER" id="PTHR18968:SF9">
    <property type="entry name" value="3D-(3,5_4)-TRIHYDROXYCYCLOHEXANE-1,2-DIONE HYDROLASE"/>
    <property type="match status" value="1"/>
</dbReference>
<dbReference type="PANTHER" id="PTHR18968">
    <property type="entry name" value="THIAMINE PYROPHOSPHATE ENZYMES"/>
    <property type="match status" value="1"/>
</dbReference>
<dbReference type="Pfam" id="PF02775">
    <property type="entry name" value="TPP_enzyme_C"/>
    <property type="match status" value="1"/>
</dbReference>
<dbReference type="Pfam" id="PF00205">
    <property type="entry name" value="TPP_enzyme_M"/>
    <property type="match status" value="1"/>
</dbReference>
<dbReference type="Pfam" id="PF02776">
    <property type="entry name" value="TPP_enzyme_N"/>
    <property type="match status" value="1"/>
</dbReference>
<dbReference type="SUPFAM" id="SSF52467">
    <property type="entry name" value="DHS-like NAD/FAD-binding domain"/>
    <property type="match status" value="1"/>
</dbReference>
<dbReference type="SUPFAM" id="SSF52518">
    <property type="entry name" value="Thiamin diphosphate-binding fold (THDP-binding)"/>
    <property type="match status" value="2"/>
</dbReference>
<dbReference type="PROSITE" id="PS00187">
    <property type="entry name" value="TPP_ENZYMES"/>
    <property type="match status" value="1"/>
</dbReference>
<name>IOLD_LACCA</name>
<gene>
    <name evidence="1" type="primary">iolD</name>
</gene>
<feature type="chain" id="PRO_0000352544" description="3D-(3,5/4)-trihydroxycyclohexane-1,2-dione hydrolase">
    <location>
        <begin position="1"/>
        <end position="642"/>
    </location>
</feature>
<feature type="region of interest" description="Thiamine pyrophosphate binding" evidence="1">
    <location>
        <begin position="446"/>
        <end position="526"/>
    </location>
</feature>
<feature type="binding site" evidence="1">
    <location>
        <position position="71"/>
    </location>
    <ligand>
        <name>thiamine diphosphate</name>
        <dbReference type="ChEBI" id="CHEBI:58937"/>
    </ligand>
</feature>
<feature type="binding site" evidence="1">
    <location>
        <position position="497"/>
    </location>
    <ligand>
        <name>Mg(2+)</name>
        <dbReference type="ChEBI" id="CHEBI:18420"/>
    </ligand>
</feature>
<feature type="binding site" evidence="1">
    <location>
        <position position="524"/>
    </location>
    <ligand>
        <name>Mg(2+)</name>
        <dbReference type="ChEBI" id="CHEBI:18420"/>
    </ligand>
</feature>